<sequence>MTMAKTLYEKVFDAHVVYEGKNELPILYIDRHLIHEVTSPQAFSGLKMAKRRMARADLTLATIDHDVSTKSMDLNACSDMAKEQITTLMQNTKEFGVRLLGLGDKNQGIVHIVGPELGFTLPGVTLVCGDSHTATHGAFGALAFGIGTSEVEHVMATQTLKQAKLKTMKIECKGQFQKGVYTKDLILYLIAQYGTAKGTGYAIEFCGELIRNLSMEARMTLCNMAIEFGAKVGMIAPDEITFEYIKGKEFAPKGEEFQKYCEYWKSLRSDEGAKYDASITLDVSKIKPQISYGTNPSQVIGIDEKIPKISDFKNQSEQKSLLDALYYVNLEQDQVIEGVKIDIVFIGSCTNGRLEDLKIAADILKGRKIHKNVKALIVPGSMQVRKEAENLGLDKIFIEAGCEWRYAGCSMCLGMNDDKANSGQRVASTSNRNFVGRQGKGSITHLMSPASAAACAIEGVICDNRKYLGV</sequence>
<keyword id="KW-0004">4Fe-4S</keyword>
<keyword id="KW-0028">Amino-acid biosynthesis</keyword>
<keyword id="KW-0100">Branched-chain amino acid biosynthesis</keyword>
<keyword id="KW-0408">Iron</keyword>
<keyword id="KW-0411">Iron-sulfur</keyword>
<keyword id="KW-0432">Leucine biosynthesis</keyword>
<keyword id="KW-0456">Lyase</keyword>
<keyword id="KW-0479">Metal-binding</keyword>
<keyword id="KW-1185">Reference proteome</keyword>
<protein>
    <recommendedName>
        <fullName evidence="1">3-isopropylmalate dehydratase large subunit</fullName>
        <ecNumber evidence="1">4.2.1.33</ecNumber>
    </recommendedName>
    <alternativeName>
        <fullName evidence="1">Alpha-IPM isomerase</fullName>
        <shortName evidence="1">IPMI</shortName>
    </alternativeName>
    <alternativeName>
        <fullName evidence="1">Isopropylmalate isomerase</fullName>
    </alternativeName>
</protein>
<organism>
    <name type="scientific">Campylobacter jejuni subsp. jejuni serotype O:2 (strain ATCC 700819 / NCTC 11168)</name>
    <dbReference type="NCBI Taxonomy" id="192222"/>
    <lineage>
        <taxon>Bacteria</taxon>
        <taxon>Pseudomonadati</taxon>
        <taxon>Campylobacterota</taxon>
        <taxon>Epsilonproteobacteria</taxon>
        <taxon>Campylobacterales</taxon>
        <taxon>Campylobacteraceae</taxon>
        <taxon>Campylobacter</taxon>
    </lineage>
</organism>
<gene>
    <name evidence="1" type="primary">leuC</name>
    <name type="ordered locus">Cj1717c</name>
</gene>
<comment type="function">
    <text evidence="1">Catalyzes the isomerization between 2-isopropylmalate and 3-isopropylmalate, via the formation of 2-isopropylmaleate.</text>
</comment>
<comment type="catalytic activity">
    <reaction evidence="1">
        <text>(2R,3S)-3-isopropylmalate = (2S)-2-isopropylmalate</text>
        <dbReference type="Rhea" id="RHEA:32287"/>
        <dbReference type="ChEBI" id="CHEBI:1178"/>
        <dbReference type="ChEBI" id="CHEBI:35121"/>
        <dbReference type="EC" id="4.2.1.33"/>
    </reaction>
</comment>
<comment type="cofactor">
    <cofactor evidence="1">
        <name>[4Fe-4S] cluster</name>
        <dbReference type="ChEBI" id="CHEBI:49883"/>
    </cofactor>
    <text evidence="1">Binds 1 [4Fe-4S] cluster per subunit.</text>
</comment>
<comment type="pathway">
    <text evidence="1">Amino-acid biosynthesis; L-leucine biosynthesis; L-leucine from 3-methyl-2-oxobutanoate: step 2/4.</text>
</comment>
<comment type="subunit">
    <text evidence="1">Heterodimer of LeuC and LeuD.</text>
</comment>
<comment type="similarity">
    <text evidence="1">Belongs to the aconitase/IPM isomerase family. LeuC type 1 subfamily.</text>
</comment>
<feature type="chain" id="PRO_0000076734" description="3-isopropylmalate dehydratase large subunit">
    <location>
        <begin position="1"/>
        <end position="470"/>
    </location>
</feature>
<feature type="binding site" evidence="1">
    <location>
        <position position="349"/>
    </location>
    <ligand>
        <name>[4Fe-4S] cluster</name>
        <dbReference type="ChEBI" id="CHEBI:49883"/>
    </ligand>
</feature>
<feature type="binding site" evidence="1">
    <location>
        <position position="409"/>
    </location>
    <ligand>
        <name>[4Fe-4S] cluster</name>
        <dbReference type="ChEBI" id="CHEBI:49883"/>
    </ligand>
</feature>
<feature type="binding site" evidence="1">
    <location>
        <position position="412"/>
    </location>
    <ligand>
        <name>[4Fe-4S] cluster</name>
        <dbReference type="ChEBI" id="CHEBI:49883"/>
    </ligand>
</feature>
<evidence type="ECO:0000255" key="1">
    <source>
        <dbReference type="HAMAP-Rule" id="MF_01026"/>
    </source>
</evidence>
<dbReference type="EC" id="4.2.1.33" evidence="1"/>
<dbReference type="EMBL" id="AL111168">
    <property type="protein sequence ID" value="CAL35811.1"/>
    <property type="molecule type" value="Genomic_DNA"/>
</dbReference>
<dbReference type="PIR" id="A81270">
    <property type="entry name" value="A81270"/>
</dbReference>
<dbReference type="RefSeq" id="WP_010891951.1">
    <property type="nucleotide sequence ID" value="NZ_SZUC01000002.1"/>
</dbReference>
<dbReference type="RefSeq" id="YP_002345083.1">
    <property type="nucleotide sequence ID" value="NC_002163.1"/>
</dbReference>
<dbReference type="SMR" id="Q9PLW1"/>
<dbReference type="IntAct" id="Q9PLW1">
    <property type="interactions" value="5"/>
</dbReference>
<dbReference type="STRING" id="192222.Cj1717c"/>
<dbReference type="PaxDb" id="192222-Cj1717c"/>
<dbReference type="DNASU" id="905994"/>
<dbReference type="EnsemblBacteria" id="CAL35811">
    <property type="protein sequence ID" value="CAL35811"/>
    <property type="gene ID" value="Cj1717c"/>
</dbReference>
<dbReference type="GeneID" id="905994"/>
<dbReference type="KEGG" id="cje:Cj1717c"/>
<dbReference type="PATRIC" id="fig|192222.6.peg.1691"/>
<dbReference type="eggNOG" id="COG0065">
    <property type="taxonomic scope" value="Bacteria"/>
</dbReference>
<dbReference type="HOGENOM" id="CLU_006714_3_4_7"/>
<dbReference type="OrthoDB" id="9764318at2"/>
<dbReference type="UniPathway" id="UPA00048">
    <property type="reaction ID" value="UER00071"/>
</dbReference>
<dbReference type="Proteomes" id="UP000000799">
    <property type="component" value="Chromosome"/>
</dbReference>
<dbReference type="GO" id="GO:0003861">
    <property type="term" value="F:3-isopropylmalate dehydratase activity"/>
    <property type="evidence" value="ECO:0007669"/>
    <property type="project" value="UniProtKB-UniRule"/>
</dbReference>
<dbReference type="GO" id="GO:0051539">
    <property type="term" value="F:4 iron, 4 sulfur cluster binding"/>
    <property type="evidence" value="ECO:0007669"/>
    <property type="project" value="UniProtKB-KW"/>
</dbReference>
<dbReference type="GO" id="GO:0046872">
    <property type="term" value="F:metal ion binding"/>
    <property type="evidence" value="ECO:0007669"/>
    <property type="project" value="UniProtKB-KW"/>
</dbReference>
<dbReference type="GO" id="GO:0009098">
    <property type="term" value="P:L-leucine biosynthetic process"/>
    <property type="evidence" value="ECO:0007669"/>
    <property type="project" value="UniProtKB-UniRule"/>
</dbReference>
<dbReference type="CDD" id="cd01583">
    <property type="entry name" value="IPMI"/>
    <property type="match status" value="1"/>
</dbReference>
<dbReference type="FunFam" id="3.30.499.10:FF:000007">
    <property type="entry name" value="3-isopropylmalate dehydratase large subunit"/>
    <property type="match status" value="1"/>
</dbReference>
<dbReference type="Gene3D" id="3.30.499.10">
    <property type="entry name" value="Aconitase, domain 3"/>
    <property type="match status" value="2"/>
</dbReference>
<dbReference type="HAMAP" id="MF_01026">
    <property type="entry name" value="LeuC_type1"/>
    <property type="match status" value="1"/>
</dbReference>
<dbReference type="InterPro" id="IPR004430">
    <property type="entry name" value="3-IsopropMal_deHydase_lsu"/>
</dbReference>
<dbReference type="InterPro" id="IPR015931">
    <property type="entry name" value="Acnase/IPM_dHydase_lsu_aba_1/3"/>
</dbReference>
<dbReference type="InterPro" id="IPR001030">
    <property type="entry name" value="Acoase/IPM_deHydtase_lsu_aba"/>
</dbReference>
<dbReference type="InterPro" id="IPR018136">
    <property type="entry name" value="Aconitase_4Fe-4S_BS"/>
</dbReference>
<dbReference type="InterPro" id="IPR036008">
    <property type="entry name" value="Aconitase_4Fe-4S_dom"/>
</dbReference>
<dbReference type="InterPro" id="IPR050067">
    <property type="entry name" value="IPM_dehydratase_rel_enz"/>
</dbReference>
<dbReference type="InterPro" id="IPR033941">
    <property type="entry name" value="IPMI_cat"/>
</dbReference>
<dbReference type="NCBIfam" id="TIGR00170">
    <property type="entry name" value="leuC"/>
    <property type="match status" value="1"/>
</dbReference>
<dbReference type="NCBIfam" id="NF004016">
    <property type="entry name" value="PRK05478.1"/>
    <property type="match status" value="1"/>
</dbReference>
<dbReference type="NCBIfam" id="NF009116">
    <property type="entry name" value="PRK12466.1"/>
    <property type="match status" value="1"/>
</dbReference>
<dbReference type="PANTHER" id="PTHR43822:SF9">
    <property type="entry name" value="3-ISOPROPYLMALATE DEHYDRATASE"/>
    <property type="match status" value="1"/>
</dbReference>
<dbReference type="PANTHER" id="PTHR43822">
    <property type="entry name" value="HOMOACONITASE, MITOCHONDRIAL-RELATED"/>
    <property type="match status" value="1"/>
</dbReference>
<dbReference type="Pfam" id="PF00330">
    <property type="entry name" value="Aconitase"/>
    <property type="match status" value="1"/>
</dbReference>
<dbReference type="PRINTS" id="PR00415">
    <property type="entry name" value="ACONITASE"/>
</dbReference>
<dbReference type="SUPFAM" id="SSF53732">
    <property type="entry name" value="Aconitase iron-sulfur domain"/>
    <property type="match status" value="1"/>
</dbReference>
<dbReference type="PROSITE" id="PS00450">
    <property type="entry name" value="ACONITASE_1"/>
    <property type="match status" value="1"/>
</dbReference>
<dbReference type="PROSITE" id="PS01244">
    <property type="entry name" value="ACONITASE_2"/>
    <property type="match status" value="1"/>
</dbReference>
<accession>Q9PLW1</accession>
<accession>Q0P7R4</accession>
<reference key="1">
    <citation type="journal article" date="2000" name="Nature">
        <title>The genome sequence of the food-borne pathogen Campylobacter jejuni reveals hypervariable sequences.</title>
        <authorList>
            <person name="Parkhill J."/>
            <person name="Wren B.W."/>
            <person name="Mungall K.L."/>
            <person name="Ketley J.M."/>
            <person name="Churcher C.M."/>
            <person name="Basham D."/>
            <person name="Chillingworth T."/>
            <person name="Davies R.M."/>
            <person name="Feltwell T."/>
            <person name="Holroyd S."/>
            <person name="Jagels K."/>
            <person name="Karlyshev A.V."/>
            <person name="Moule S."/>
            <person name="Pallen M.J."/>
            <person name="Penn C.W."/>
            <person name="Quail M.A."/>
            <person name="Rajandream M.A."/>
            <person name="Rutherford K.M."/>
            <person name="van Vliet A.H.M."/>
            <person name="Whitehead S."/>
            <person name="Barrell B.G."/>
        </authorList>
    </citation>
    <scope>NUCLEOTIDE SEQUENCE [LARGE SCALE GENOMIC DNA]</scope>
    <source>
        <strain>ATCC 700819 / NCTC 11168</strain>
    </source>
</reference>
<name>LEUC_CAMJE</name>
<proteinExistence type="inferred from homology"/>